<feature type="chain" id="PRO_1000124088" description="1-deoxy-D-xylulose 5-phosphate reductoisomerase">
    <location>
        <begin position="1"/>
        <end position="398"/>
    </location>
</feature>
<feature type="binding site" evidence="1">
    <location>
        <position position="10"/>
    </location>
    <ligand>
        <name>NADPH</name>
        <dbReference type="ChEBI" id="CHEBI:57783"/>
    </ligand>
</feature>
<feature type="binding site" evidence="1">
    <location>
        <position position="11"/>
    </location>
    <ligand>
        <name>NADPH</name>
        <dbReference type="ChEBI" id="CHEBI:57783"/>
    </ligand>
</feature>
<feature type="binding site" evidence="1">
    <location>
        <position position="12"/>
    </location>
    <ligand>
        <name>NADPH</name>
        <dbReference type="ChEBI" id="CHEBI:57783"/>
    </ligand>
</feature>
<feature type="binding site" evidence="1">
    <location>
        <position position="13"/>
    </location>
    <ligand>
        <name>NADPH</name>
        <dbReference type="ChEBI" id="CHEBI:57783"/>
    </ligand>
</feature>
<feature type="binding site" evidence="1">
    <location>
        <position position="38"/>
    </location>
    <ligand>
        <name>NADPH</name>
        <dbReference type="ChEBI" id="CHEBI:57783"/>
    </ligand>
</feature>
<feature type="binding site" evidence="1">
    <location>
        <position position="124"/>
    </location>
    <ligand>
        <name>NADPH</name>
        <dbReference type="ChEBI" id="CHEBI:57783"/>
    </ligand>
</feature>
<feature type="binding site" evidence="1">
    <location>
        <position position="125"/>
    </location>
    <ligand>
        <name>1-deoxy-D-xylulose 5-phosphate</name>
        <dbReference type="ChEBI" id="CHEBI:57792"/>
    </ligand>
</feature>
<feature type="binding site" evidence="1">
    <location>
        <position position="126"/>
    </location>
    <ligand>
        <name>NADPH</name>
        <dbReference type="ChEBI" id="CHEBI:57783"/>
    </ligand>
</feature>
<feature type="binding site" evidence="1">
    <location>
        <position position="150"/>
    </location>
    <ligand>
        <name>Mn(2+)</name>
        <dbReference type="ChEBI" id="CHEBI:29035"/>
    </ligand>
</feature>
<feature type="binding site" evidence="1">
    <location>
        <position position="151"/>
    </location>
    <ligand>
        <name>1-deoxy-D-xylulose 5-phosphate</name>
        <dbReference type="ChEBI" id="CHEBI:57792"/>
    </ligand>
</feature>
<feature type="binding site" evidence="1">
    <location>
        <position position="152"/>
    </location>
    <ligand>
        <name>1-deoxy-D-xylulose 5-phosphate</name>
        <dbReference type="ChEBI" id="CHEBI:57792"/>
    </ligand>
</feature>
<feature type="binding site" evidence="1">
    <location>
        <position position="152"/>
    </location>
    <ligand>
        <name>Mn(2+)</name>
        <dbReference type="ChEBI" id="CHEBI:29035"/>
    </ligand>
</feature>
<feature type="binding site" evidence="1">
    <location>
        <position position="176"/>
    </location>
    <ligand>
        <name>1-deoxy-D-xylulose 5-phosphate</name>
        <dbReference type="ChEBI" id="CHEBI:57792"/>
    </ligand>
</feature>
<feature type="binding site" evidence="1">
    <location>
        <position position="199"/>
    </location>
    <ligand>
        <name>1-deoxy-D-xylulose 5-phosphate</name>
        <dbReference type="ChEBI" id="CHEBI:57792"/>
    </ligand>
</feature>
<feature type="binding site" evidence="1">
    <location>
        <position position="205"/>
    </location>
    <ligand>
        <name>NADPH</name>
        <dbReference type="ChEBI" id="CHEBI:57783"/>
    </ligand>
</feature>
<feature type="binding site" evidence="1">
    <location>
        <position position="212"/>
    </location>
    <ligand>
        <name>1-deoxy-D-xylulose 5-phosphate</name>
        <dbReference type="ChEBI" id="CHEBI:57792"/>
    </ligand>
</feature>
<feature type="binding site" evidence="1">
    <location>
        <position position="217"/>
    </location>
    <ligand>
        <name>1-deoxy-D-xylulose 5-phosphate</name>
        <dbReference type="ChEBI" id="CHEBI:57792"/>
    </ligand>
</feature>
<feature type="binding site" evidence="1">
    <location>
        <position position="218"/>
    </location>
    <ligand>
        <name>1-deoxy-D-xylulose 5-phosphate</name>
        <dbReference type="ChEBI" id="CHEBI:57792"/>
    </ligand>
</feature>
<feature type="binding site" evidence="1">
    <location>
        <position position="221"/>
    </location>
    <ligand>
        <name>1-deoxy-D-xylulose 5-phosphate</name>
        <dbReference type="ChEBI" id="CHEBI:57792"/>
    </ligand>
</feature>
<feature type="binding site" evidence="1">
    <location>
        <position position="221"/>
    </location>
    <ligand>
        <name>Mn(2+)</name>
        <dbReference type="ChEBI" id="CHEBI:29035"/>
    </ligand>
</feature>
<protein>
    <recommendedName>
        <fullName evidence="1">1-deoxy-D-xylulose 5-phosphate reductoisomerase</fullName>
        <shortName evidence="1">DXP reductoisomerase</shortName>
        <ecNumber evidence="1">1.1.1.267</ecNumber>
    </recommendedName>
    <alternativeName>
        <fullName evidence="1">1-deoxyxylulose-5-phosphate reductoisomerase</fullName>
    </alternativeName>
    <alternativeName>
        <fullName evidence="1">2-C-methyl-D-erythritol 4-phosphate synthase</fullName>
    </alternativeName>
</protein>
<name>DXR_CROS5</name>
<accession>B1WNP5</accession>
<dbReference type="EC" id="1.1.1.267" evidence="1"/>
<dbReference type="EMBL" id="CP000806">
    <property type="protein sequence ID" value="ACB51474.1"/>
    <property type="molecule type" value="Genomic_DNA"/>
</dbReference>
<dbReference type="RefSeq" id="WP_009546877.1">
    <property type="nucleotide sequence ID" value="NC_010546.1"/>
</dbReference>
<dbReference type="SMR" id="B1WNP5"/>
<dbReference type="STRING" id="43989.cce_2124"/>
<dbReference type="KEGG" id="cyt:cce_2124"/>
<dbReference type="eggNOG" id="COG0743">
    <property type="taxonomic scope" value="Bacteria"/>
</dbReference>
<dbReference type="HOGENOM" id="CLU_035714_4_0_3"/>
<dbReference type="OrthoDB" id="9806546at2"/>
<dbReference type="UniPathway" id="UPA00056">
    <property type="reaction ID" value="UER00092"/>
</dbReference>
<dbReference type="Proteomes" id="UP000001203">
    <property type="component" value="Chromosome circular"/>
</dbReference>
<dbReference type="GO" id="GO:0030604">
    <property type="term" value="F:1-deoxy-D-xylulose-5-phosphate reductoisomerase activity"/>
    <property type="evidence" value="ECO:0007669"/>
    <property type="project" value="UniProtKB-UniRule"/>
</dbReference>
<dbReference type="GO" id="GO:0030145">
    <property type="term" value="F:manganese ion binding"/>
    <property type="evidence" value="ECO:0007669"/>
    <property type="project" value="TreeGrafter"/>
</dbReference>
<dbReference type="GO" id="GO:0070402">
    <property type="term" value="F:NADPH binding"/>
    <property type="evidence" value="ECO:0007669"/>
    <property type="project" value="InterPro"/>
</dbReference>
<dbReference type="GO" id="GO:0051484">
    <property type="term" value="P:isopentenyl diphosphate biosynthetic process, methylerythritol 4-phosphate pathway involved in terpenoid biosynthetic process"/>
    <property type="evidence" value="ECO:0007669"/>
    <property type="project" value="TreeGrafter"/>
</dbReference>
<dbReference type="FunFam" id="3.40.50.720:FF:000183">
    <property type="entry name" value="1-deoxy-D-xylulose 5-phosphate reductoisomerase, chloroplastic"/>
    <property type="match status" value="1"/>
</dbReference>
<dbReference type="Gene3D" id="1.10.1740.10">
    <property type="match status" value="1"/>
</dbReference>
<dbReference type="Gene3D" id="3.40.50.720">
    <property type="entry name" value="NAD(P)-binding Rossmann-like Domain"/>
    <property type="match status" value="1"/>
</dbReference>
<dbReference type="HAMAP" id="MF_00183">
    <property type="entry name" value="DXP_reductoisom"/>
    <property type="match status" value="1"/>
</dbReference>
<dbReference type="InterPro" id="IPR003821">
    <property type="entry name" value="DXP_reductoisomerase"/>
</dbReference>
<dbReference type="InterPro" id="IPR013644">
    <property type="entry name" value="DXP_reductoisomerase_C"/>
</dbReference>
<dbReference type="InterPro" id="IPR013512">
    <property type="entry name" value="DXP_reductoisomerase_N"/>
</dbReference>
<dbReference type="InterPro" id="IPR026877">
    <property type="entry name" value="DXPR_C"/>
</dbReference>
<dbReference type="InterPro" id="IPR036169">
    <property type="entry name" value="DXPR_C_sf"/>
</dbReference>
<dbReference type="InterPro" id="IPR036291">
    <property type="entry name" value="NAD(P)-bd_dom_sf"/>
</dbReference>
<dbReference type="NCBIfam" id="TIGR00243">
    <property type="entry name" value="Dxr"/>
    <property type="match status" value="1"/>
</dbReference>
<dbReference type="NCBIfam" id="NF009114">
    <property type="entry name" value="PRK12464.1"/>
    <property type="match status" value="1"/>
</dbReference>
<dbReference type="PANTHER" id="PTHR30525">
    <property type="entry name" value="1-DEOXY-D-XYLULOSE 5-PHOSPHATE REDUCTOISOMERASE"/>
    <property type="match status" value="1"/>
</dbReference>
<dbReference type="PANTHER" id="PTHR30525:SF0">
    <property type="entry name" value="1-DEOXY-D-XYLULOSE 5-PHOSPHATE REDUCTOISOMERASE, CHLOROPLASTIC"/>
    <property type="match status" value="1"/>
</dbReference>
<dbReference type="Pfam" id="PF08436">
    <property type="entry name" value="DXP_redisom_C"/>
    <property type="match status" value="1"/>
</dbReference>
<dbReference type="Pfam" id="PF02670">
    <property type="entry name" value="DXP_reductoisom"/>
    <property type="match status" value="1"/>
</dbReference>
<dbReference type="Pfam" id="PF13288">
    <property type="entry name" value="DXPR_C"/>
    <property type="match status" value="1"/>
</dbReference>
<dbReference type="PIRSF" id="PIRSF006205">
    <property type="entry name" value="Dxp_reductismrs"/>
    <property type="match status" value="1"/>
</dbReference>
<dbReference type="SUPFAM" id="SSF69055">
    <property type="entry name" value="1-deoxy-D-xylulose-5-phosphate reductoisomerase, C-terminal domain"/>
    <property type="match status" value="1"/>
</dbReference>
<dbReference type="SUPFAM" id="SSF55347">
    <property type="entry name" value="Glyceraldehyde-3-phosphate dehydrogenase-like, C-terminal domain"/>
    <property type="match status" value="1"/>
</dbReference>
<dbReference type="SUPFAM" id="SSF51735">
    <property type="entry name" value="NAD(P)-binding Rossmann-fold domains"/>
    <property type="match status" value="1"/>
</dbReference>
<proteinExistence type="inferred from homology"/>
<reference key="1">
    <citation type="journal article" date="2008" name="Proc. Natl. Acad. Sci. U.S.A.">
        <title>The genome of Cyanothece 51142, a unicellular diazotrophic cyanobacterium important in the marine nitrogen cycle.</title>
        <authorList>
            <person name="Welsh E.A."/>
            <person name="Liberton M."/>
            <person name="Stoeckel J."/>
            <person name="Loh T."/>
            <person name="Elvitigala T."/>
            <person name="Wang C."/>
            <person name="Wollam A."/>
            <person name="Fulton R.S."/>
            <person name="Clifton S.W."/>
            <person name="Jacobs J.M."/>
            <person name="Aurora R."/>
            <person name="Ghosh B.K."/>
            <person name="Sherman L.A."/>
            <person name="Smith R.D."/>
            <person name="Wilson R.K."/>
            <person name="Pakrasi H.B."/>
        </authorList>
    </citation>
    <scope>NUCLEOTIDE SEQUENCE [LARGE SCALE GENOMIC DNA]</scope>
    <source>
        <strain>ATCC 51142 / BH68</strain>
    </source>
</reference>
<organism>
    <name type="scientific">Crocosphaera subtropica (strain ATCC 51142 / BH68)</name>
    <name type="common">Cyanothece sp. (strain ATCC 51142)</name>
    <dbReference type="NCBI Taxonomy" id="43989"/>
    <lineage>
        <taxon>Bacteria</taxon>
        <taxon>Bacillati</taxon>
        <taxon>Cyanobacteriota</taxon>
        <taxon>Cyanophyceae</taxon>
        <taxon>Oscillatoriophycideae</taxon>
        <taxon>Chroococcales</taxon>
        <taxon>Aphanothecaceae</taxon>
        <taxon>Crocosphaera</taxon>
        <taxon>Crocosphaera subtropica</taxon>
    </lineage>
</organism>
<comment type="function">
    <text evidence="1">Catalyzes the NADPH-dependent rearrangement and reduction of 1-deoxy-D-xylulose-5-phosphate (DXP) to 2-C-methyl-D-erythritol 4-phosphate (MEP).</text>
</comment>
<comment type="catalytic activity">
    <reaction evidence="1">
        <text>2-C-methyl-D-erythritol 4-phosphate + NADP(+) = 1-deoxy-D-xylulose 5-phosphate + NADPH + H(+)</text>
        <dbReference type="Rhea" id="RHEA:13717"/>
        <dbReference type="ChEBI" id="CHEBI:15378"/>
        <dbReference type="ChEBI" id="CHEBI:57783"/>
        <dbReference type="ChEBI" id="CHEBI:57792"/>
        <dbReference type="ChEBI" id="CHEBI:58262"/>
        <dbReference type="ChEBI" id="CHEBI:58349"/>
        <dbReference type="EC" id="1.1.1.267"/>
    </reaction>
    <physiologicalReaction direction="right-to-left" evidence="1">
        <dbReference type="Rhea" id="RHEA:13719"/>
    </physiologicalReaction>
</comment>
<comment type="cofactor">
    <cofactor evidence="1">
        <name>Mg(2+)</name>
        <dbReference type="ChEBI" id="CHEBI:18420"/>
    </cofactor>
    <cofactor evidence="1">
        <name>Mn(2+)</name>
        <dbReference type="ChEBI" id="CHEBI:29035"/>
    </cofactor>
</comment>
<comment type="pathway">
    <text evidence="1">Isoprenoid biosynthesis; isopentenyl diphosphate biosynthesis via DXP pathway; isopentenyl diphosphate from 1-deoxy-D-xylulose 5-phosphate: step 1/6.</text>
</comment>
<comment type="similarity">
    <text evidence="1">Belongs to the DXR family.</text>
</comment>
<evidence type="ECO:0000255" key="1">
    <source>
        <dbReference type="HAMAP-Rule" id="MF_00183"/>
    </source>
</evidence>
<sequence length="398" mass="43156">MKKISLLGSTGSIGTQTLDIVNQYPDQFQVVGLATRSNVELLATQVQQFRPEIVAICDESKLGSLKDAIASMDYSPLILAGEQGVAEVARHGDAESVVTGIVGCAGLLPTIAAIEAGKDIALANKETLIAGGPVVLPLIEKHGVKLLPADSEHSAIFQCLQGVPDGGLRRIILTASGGAFRDWPVEQLKYVTVQDALKHPNWSMGQKITVDSATLMNKGLEVIEAHFLFGMDYENIDIVIHPQSIIHSLIEVQDTSVLAQLGWPDMRLPLLYALSWPERIYTDWEQLDLVKAGSLTFREPDHDKYPCMQLAYAAGNAGGAMPAVLNAANEQAVALFLAEKIAFLDIPKVIEKTCDNFRDHNRSQPSLEDILEADKWAREAVLMAAEGLGTENKVVSLK</sequence>
<gene>
    <name evidence="1" type="primary">dxr</name>
    <name type="ordered locus">cce_2124</name>
</gene>
<keyword id="KW-0414">Isoprene biosynthesis</keyword>
<keyword id="KW-0464">Manganese</keyword>
<keyword id="KW-0479">Metal-binding</keyword>
<keyword id="KW-0521">NADP</keyword>
<keyword id="KW-0560">Oxidoreductase</keyword>
<keyword id="KW-1185">Reference proteome</keyword>